<reference key="1">
    <citation type="journal article" date="1997" name="Nature">
        <title>The complete genome sequence of the hyperthermophilic, sulphate-reducing archaeon Archaeoglobus fulgidus.</title>
        <authorList>
            <person name="Klenk H.-P."/>
            <person name="Clayton R.A."/>
            <person name="Tomb J.-F."/>
            <person name="White O."/>
            <person name="Nelson K.E."/>
            <person name="Ketchum K.A."/>
            <person name="Dodson R.J."/>
            <person name="Gwinn M.L."/>
            <person name="Hickey E.K."/>
            <person name="Peterson J.D."/>
            <person name="Richardson D.L."/>
            <person name="Kerlavage A.R."/>
            <person name="Graham D.E."/>
            <person name="Kyrpides N.C."/>
            <person name="Fleischmann R.D."/>
            <person name="Quackenbush J."/>
            <person name="Lee N.H."/>
            <person name="Sutton G.G."/>
            <person name="Gill S.R."/>
            <person name="Kirkness E.F."/>
            <person name="Dougherty B.A."/>
            <person name="McKenney K."/>
            <person name="Adams M.D."/>
            <person name="Loftus B.J."/>
            <person name="Peterson S.N."/>
            <person name="Reich C.I."/>
            <person name="McNeil L.K."/>
            <person name="Badger J.H."/>
            <person name="Glodek A."/>
            <person name="Zhou L."/>
            <person name="Overbeek R."/>
            <person name="Gocayne J.D."/>
            <person name="Weidman J.F."/>
            <person name="McDonald L.A."/>
            <person name="Utterback T.R."/>
            <person name="Cotton M.D."/>
            <person name="Spriggs T."/>
            <person name="Artiach P."/>
            <person name="Kaine B.P."/>
            <person name="Sykes S.M."/>
            <person name="Sadow P.W."/>
            <person name="D'Andrea K.P."/>
            <person name="Bowman C."/>
            <person name="Fujii C."/>
            <person name="Garland S.A."/>
            <person name="Mason T.M."/>
            <person name="Olsen G.J."/>
            <person name="Fraser C.M."/>
            <person name="Smith H.O."/>
            <person name="Woese C.R."/>
            <person name="Venter J.C."/>
        </authorList>
    </citation>
    <scope>NUCLEOTIDE SEQUENCE [LARGE SCALE GENOMIC DNA]</scope>
    <source>
        <strain>ATCC 49558 / DSM 4304 / JCM 9628 / NBRC 100126 / VC-16</strain>
    </source>
</reference>
<reference key="2">
    <citation type="journal article" date="2005" name="J. Mol. Biol.">
        <title>Crystal structures of an NAD kinase from Archaeoglobus fulgidus in complex with ATP, NAD, or NADP.</title>
        <authorList>
            <person name="Liu J."/>
            <person name="Lou Y."/>
            <person name="Yokota H."/>
            <person name="Adams P.D."/>
            <person name="Kim R."/>
            <person name="Kim S.H."/>
        </authorList>
    </citation>
    <scope>X-RAY CRYSTALLOGRAPHY (2.45 ANGSTROMS) IN COMPLEX WITH ATP AND NAD</scope>
    <scope>FUNCTION</scope>
    <scope>SUBUNIT</scope>
</reference>
<feature type="chain" id="PRO_0000120697" description="NAD kinase">
    <location>
        <begin position="1"/>
        <end position="249"/>
    </location>
</feature>
<feature type="active site" description="Proton acceptor" evidence="1">
    <location>
        <position position="49"/>
    </location>
</feature>
<feature type="binding site" evidence="1 2">
    <location>
        <begin position="49"/>
        <end position="50"/>
    </location>
    <ligand>
        <name>NAD(+)</name>
        <dbReference type="ChEBI" id="CHEBI:57540"/>
    </ligand>
</feature>
<feature type="binding site" evidence="1 2">
    <location>
        <position position="54"/>
    </location>
    <ligand>
        <name>NAD(+)</name>
        <dbReference type="ChEBI" id="CHEBI:57540"/>
    </ligand>
</feature>
<feature type="binding site" evidence="1 2">
    <location>
        <begin position="115"/>
        <end position="116"/>
    </location>
    <ligand>
        <name>NAD(+)</name>
        <dbReference type="ChEBI" id="CHEBI:57540"/>
    </ligand>
</feature>
<feature type="binding site" evidence="1 2">
    <location>
        <position position="126"/>
    </location>
    <ligand>
        <name>NAD(+)</name>
        <dbReference type="ChEBI" id="CHEBI:57540"/>
    </ligand>
</feature>
<feature type="binding site" evidence="1 2">
    <location>
        <position position="143"/>
    </location>
    <ligand>
        <name>NAD(+)</name>
        <dbReference type="ChEBI" id="CHEBI:57540"/>
    </ligand>
</feature>
<feature type="binding site" evidence="3">
    <location>
        <position position="145"/>
    </location>
    <ligand>
        <name>NAD(+)</name>
        <dbReference type="ChEBI" id="CHEBI:57540"/>
    </ligand>
</feature>
<feature type="binding site" evidence="1 2">
    <location>
        <position position="153"/>
    </location>
    <ligand>
        <name>NAD(+)</name>
        <dbReference type="ChEBI" id="CHEBI:57540"/>
    </ligand>
</feature>
<feature type="binding site" evidence="1 2">
    <location>
        <begin position="156"/>
        <end position="161"/>
    </location>
    <ligand>
        <name>NAD(+)</name>
        <dbReference type="ChEBI" id="CHEBI:57540"/>
    </ligand>
</feature>
<feature type="binding site" evidence="3">
    <location>
        <position position="180"/>
    </location>
    <ligand>
        <name>NAD(+)</name>
        <dbReference type="ChEBI" id="CHEBI:57540"/>
    </ligand>
</feature>
<feature type="binding site" evidence="1 2">
    <location>
        <position position="211"/>
    </location>
    <ligand>
        <name>NAD(+)</name>
        <dbReference type="ChEBI" id="CHEBI:57540"/>
    </ligand>
</feature>
<feature type="strand" evidence="4">
    <location>
        <begin position="2"/>
        <end position="10"/>
    </location>
</feature>
<feature type="helix" evidence="4">
    <location>
        <begin position="13"/>
        <end position="22"/>
    </location>
</feature>
<feature type="strand" evidence="4">
    <location>
        <begin position="26"/>
        <end position="32"/>
    </location>
</feature>
<feature type="helix" evidence="4">
    <location>
        <begin position="35"/>
        <end position="39"/>
    </location>
</feature>
<feature type="strand" evidence="4">
    <location>
        <begin position="40"/>
        <end position="47"/>
    </location>
</feature>
<feature type="helix" evidence="4">
    <location>
        <begin position="49"/>
        <end position="56"/>
    </location>
</feature>
<feature type="strand" evidence="4">
    <location>
        <begin position="65"/>
        <end position="69"/>
    </location>
</feature>
<feature type="strand" evidence="4">
    <location>
        <begin position="71"/>
        <end position="73"/>
    </location>
</feature>
<feature type="turn" evidence="5">
    <location>
        <begin position="81"/>
        <end position="83"/>
    </location>
</feature>
<feature type="helix" evidence="4">
    <location>
        <begin position="85"/>
        <end position="94"/>
    </location>
</feature>
<feature type="strand" evidence="4">
    <location>
        <begin position="97"/>
        <end position="100"/>
    </location>
</feature>
<feature type="strand" evidence="4">
    <location>
        <begin position="103"/>
        <end position="105"/>
    </location>
</feature>
<feature type="strand" evidence="4">
    <location>
        <begin position="108"/>
        <end position="123"/>
    </location>
</feature>
<feature type="strand" evidence="4">
    <location>
        <begin position="128"/>
        <end position="134"/>
    </location>
</feature>
<feature type="strand" evidence="4">
    <location>
        <begin position="137"/>
        <end position="152"/>
    </location>
</feature>
<feature type="helix" evidence="4">
    <location>
        <begin position="153"/>
        <end position="156"/>
    </location>
</feature>
<feature type="helix" evidence="4">
    <location>
        <begin position="158"/>
        <end position="161"/>
    </location>
</feature>
<feature type="strand" evidence="4">
    <location>
        <begin position="174"/>
        <end position="180"/>
    </location>
</feature>
<feature type="strand" evidence="4">
    <location>
        <begin position="183"/>
        <end position="185"/>
    </location>
</feature>
<feature type="strand" evidence="4">
    <location>
        <begin position="189"/>
        <end position="191"/>
    </location>
</feature>
<feature type="strand" evidence="4">
    <location>
        <begin position="197"/>
        <end position="208"/>
    </location>
</feature>
<feature type="turn" evidence="4">
    <location>
        <begin position="209"/>
        <end position="211"/>
    </location>
</feature>
<feature type="strand" evidence="4">
    <location>
        <begin position="212"/>
        <end position="224"/>
    </location>
</feature>
<feature type="strand" evidence="4">
    <location>
        <begin position="229"/>
        <end position="232"/>
    </location>
</feature>
<feature type="helix" evidence="4">
    <location>
        <begin position="237"/>
        <end position="246"/>
    </location>
</feature>
<keyword id="KW-0002">3D-structure</keyword>
<keyword id="KW-0067">ATP-binding</keyword>
<keyword id="KW-0963">Cytoplasm</keyword>
<keyword id="KW-0418">Kinase</keyword>
<keyword id="KW-0520">NAD</keyword>
<keyword id="KW-0521">NADP</keyword>
<keyword id="KW-0547">Nucleotide-binding</keyword>
<keyword id="KW-1185">Reference proteome</keyword>
<keyword id="KW-0808">Transferase</keyword>
<sequence>MRAAVVYKTDGHVKRIEEALKRLEVEVELFNQPSEELENFDFIVSVGGDGTILRILQKLKRCPPIFGINTGRVGLLTHASPENFEVELKKAVEKFEVERFPRVSCSAMPDVLALNEIAVLSRKPAKMIDVALRVDGVEVDRIRCDGFIVATQIGSTGYAFSAGGPVVEPYLECFILIPIAPFRFGWKPYVVSMERKIEVIAEKAIVVADGQKSVDFDGEITIEKSEFPAVFFKNEKRFRNLFGKVRSIG</sequence>
<gene>
    <name evidence="1" type="primary">nadK</name>
    <name type="ordered locus">AF_2373</name>
</gene>
<protein>
    <recommendedName>
        <fullName evidence="1">NAD kinase</fullName>
        <ecNumber evidence="1">2.7.1.23</ecNumber>
    </recommendedName>
    <alternativeName>
        <fullName evidence="1">ATP-dependent NAD kinase</fullName>
    </alternativeName>
</protein>
<proteinExistence type="evidence at protein level"/>
<organism>
    <name type="scientific">Archaeoglobus fulgidus (strain ATCC 49558 / DSM 4304 / JCM 9628 / NBRC 100126 / VC-16)</name>
    <dbReference type="NCBI Taxonomy" id="224325"/>
    <lineage>
        <taxon>Archaea</taxon>
        <taxon>Methanobacteriati</taxon>
        <taxon>Methanobacteriota</taxon>
        <taxon>Archaeoglobi</taxon>
        <taxon>Archaeoglobales</taxon>
        <taxon>Archaeoglobaceae</taxon>
        <taxon>Archaeoglobus</taxon>
    </lineage>
</organism>
<dbReference type="EC" id="2.7.1.23" evidence="1"/>
<dbReference type="EMBL" id="AE000782">
    <property type="protein sequence ID" value="AAB91287.1"/>
    <property type="molecule type" value="Genomic_DNA"/>
</dbReference>
<dbReference type="PIR" id="E69546">
    <property type="entry name" value="E69546"/>
</dbReference>
<dbReference type="RefSeq" id="WP_010879860.1">
    <property type="nucleotide sequence ID" value="NC_000917.1"/>
</dbReference>
<dbReference type="PDB" id="1SUW">
    <property type="method" value="X-ray"/>
    <property type="resolution" value="2.45 A"/>
    <property type="chains" value="A/B/C/D=1-249"/>
</dbReference>
<dbReference type="PDB" id="1Z0S">
    <property type="method" value="X-ray"/>
    <property type="resolution" value="1.70 A"/>
    <property type="chains" value="A/B/C/D=1-249"/>
</dbReference>
<dbReference type="PDB" id="1Z0U">
    <property type="method" value="X-ray"/>
    <property type="resolution" value="2.00 A"/>
    <property type="chains" value="A/B=1-249"/>
</dbReference>
<dbReference type="PDB" id="1Z0Z">
    <property type="method" value="X-ray"/>
    <property type="resolution" value="2.85 A"/>
    <property type="chains" value="A/B/C/D=1-249"/>
</dbReference>
<dbReference type="PDBsum" id="1SUW"/>
<dbReference type="PDBsum" id="1Z0S"/>
<dbReference type="PDBsum" id="1Z0U"/>
<dbReference type="PDBsum" id="1Z0Z"/>
<dbReference type="SMR" id="O30297"/>
<dbReference type="STRING" id="224325.AF_2373"/>
<dbReference type="PaxDb" id="224325-AF_2373"/>
<dbReference type="EnsemblBacteria" id="AAB91287">
    <property type="protein sequence ID" value="AAB91287"/>
    <property type="gene ID" value="AF_2373"/>
</dbReference>
<dbReference type="GeneID" id="1485603"/>
<dbReference type="KEGG" id="afu:AF_2373"/>
<dbReference type="eggNOG" id="arCOG01348">
    <property type="taxonomic scope" value="Archaea"/>
</dbReference>
<dbReference type="HOGENOM" id="CLU_008831_0_3_2"/>
<dbReference type="OrthoDB" id="77798at2157"/>
<dbReference type="PhylomeDB" id="O30297"/>
<dbReference type="BRENDA" id="2.7.1.23">
    <property type="organism ID" value="414"/>
</dbReference>
<dbReference type="EvolutionaryTrace" id="O30297"/>
<dbReference type="Proteomes" id="UP000002199">
    <property type="component" value="Chromosome"/>
</dbReference>
<dbReference type="GO" id="GO:0005737">
    <property type="term" value="C:cytoplasm"/>
    <property type="evidence" value="ECO:0007669"/>
    <property type="project" value="UniProtKB-SubCell"/>
</dbReference>
<dbReference type="GO" id="GO:0005524">
    <property type="term" value="F:ATP binding"/>
    <property type="evidence" value="ECO:0000314"/>
    <property type="project" value="UniProtKB"/>
</dbReference>
<dbReference type="GO" id="GO:0046872">
    <property type="term" value="F:metal ion binding"/>
    <property type="evidence" value="ECO:0007669"/>
    <property type="project" value="UniProtKB-UniRule"/>
</dbReference>
<dbReference type="GO" id="GO:0051287">
    <property type="term" value="F:NAD binding"/>
    <property type="evidence" value="ECO:0000314"/>
    <property type="project" value="UniProtKB"/>
</dbReference>
<dbReference type="GO" id="GO:0003951">
    <property type="term" value="F:NAD+ kinase activity"/>
    <property type="evidence" value="ECO:0000314"/>
    <property type="project" value="UniProtKB"/>
</dbReference>
<dbReference type="GO" id="GO:0019674">
    <property type="term" value="P:NAD metabolic process"/>
    <property type="evidence" value="ECO:0007669"/>
    <property type="project" value="InterPro"/>
</dbReference>
<dbReference type="GO" id="GO:0006741">
    <property type="term" value="P:NADP biosynthetic process"/>
    <property type="evidence" value="ECO:0007669"/>
    <property type="project" value="UniProtKB-UniRule"/>
</dbReference>
<dbReference type="FunFam" id="2.60.200.30:FF:000020">
    <property type="entry name" value="NAD kinase"/>
    <property type="match status" value="1"/>
</dbReference>
<dbReference type="Gene3D" id="3.40.50.10330">
    <property type="entry name" value="Probable inorganic polyphosphate/atp-NAD kinase, domain 1"/>
    <property type="match status" value="1"/>
</dbReference>
<dbReference type="Gene3D" id="2.60.200.30">
    <property type="entry name" value="Probable inorganic polyphosphate/atp-NAD kinase, domain 2"/>
    <property type="match status" value="1"/>
</dbReference>
<dbReference type="HAMAP" id="MF_00361">
    <property type="entry name" value="NAD_kinase"/>
    <property type="match status" value="1"/>
</dbReference>
<dbReference type="InterPro" id="IPR017438">
    <property type="entry name" value="ATP-NAD_kinase_N"/>
</dbReference>
<dbReference type="InterPro" id="IPR017437">
    <property type="entry name" value="ATP-NAD_kinase_PpnK-typ_C"/>
</dbReference>
<dbReference type="InterPro" id="IPR016064">
    <property type="entry name" value="NAD/diacylglycerol_kinase_sf"/>
</dbReference>
<dbReference type="InterPro" id="IPR002504">
    <property type="entry name" value="NADK"/>
</dbReference>
<dbReference type="PANTHER" id="PTHR20275:SF43">
    <property type="entry name" value="BIFUNCTIONAL NADP PHOSPHATASE_NAD KINASE"/>
    <property type="match status" value="1"/>
</dbReference>
<dbReference type="PANTHER" id="PTHR20275">
    <property type="entry name" value="NAD KINASE"/>
    <property type="match status" value="1"/>
</dbReference>
<dbReference type="Pfam" id="PF01513">
    <property type="entry name" value="NAD_kinase"/>
    <property type="match status" value="1"/>
</dbReference>
<dbReference type="Pfam" id="PF20143">
    <property type="entry name" value="NAD_kinase_C"/>
    <property type="match status" value="1"/>
</dbReference>
<dbReference type="SUPFAM" id="SSF111331">
    <property type="entry name" value="NAD kinase/diacylglycerol kinase-like"/>
    <property type="match status" value="1"/>
</dbReference>
<accession>O30297</accession>
<name>NADK_ARCFU</name>
<evidence type="ECO:0000255" key="1">
    <source>
        <dbReference type="HAMAP-Rule" id="MF_00361"/>
    </source>
</evidence>
<evidence type="ECO:0000269" key="2">
    <source>
    </source>
</evidence>
<evidence type="ECO:0000305" key="3">
    <source>
    </source>
</evidence>
<evidence type="ECO:0007829" key="4">
    <source>
        <dbReference type="PDB" id="1Z0S"/>
    </source>
</evidence>
<evidence type="ECO:0007829" key="5">
    <source>
        <dbReference type="PDB" id="1Z0U"/>
    </source>
</evidence>
<comment type="function">
    <text evidence="2">Involved in the regulation of the intracellular balance between NAD(H) and NADP(H), and is a key enzyme in the biosynthesis of NADP. Catalyzes specifically the phosphorylation on 2'-hydroxyl of the adenosine moiety of NAD to yield NADP.</text>
</comment>
<comment type="catalytic activity">
    <reaction evidence="1">
        <text>NAD(+) + ATP = ADP + NADP(+) + H(+)</text>
        <dbReference type="Rhea" id="RHEA:18629"/>
        <dbReference type="ChEBI" id="CHEBI:15378"/>
        <dbReference type="ChEBI" id="CHEBI:30616"/>
        <dbReference type="ChEBI" id="CHEBI:57540"/>
        <dbReference type="ChEBI" id="CHEBI:58349"/>
        <dbReference type="ChEBI" id="CHEBI:456216"/>
        <dbReference type="EC" id="2.7.1.23"/>
    </reaction>
</comment>
<comment type="cofactor">
    <cofactor evidence="1">
        <name>a divalent metal cation</name>
        <dbReference type="ChEBI" id="CHEBI:60240"/>
    </cofactor>
</comment>
<comment type="subunit">
    <text evidence="2">Homotetramer.</text>
</comment>
<comment type="subcellular location">
    <subcellularLocation>
        <location evidence="1">Cytoplasm</location>
    </subcellularLocation>
</comment>
<comment type="similarity">
    <text evidence="1">Belongs to the NAD kinase family.</text>
</comment>